<accession>Q1LSP0</accession>
<feature type="chain" id="PRO_1000016765" description="Queuine tRNA-ribosyltransferase">
    <location>
        <begin position="1"/>
        <end position="370"/>
    </location>
</feature>
<feature type="region of interest" description="RNA binding" evidence="1">
    <location>
        <begin position="245"/>
        <end position="251"/>
    </location>
</feature>
<feature type="region of interest" description="RNA binding; important for wobble base 34 recognition" evidence="1">
    <location>
        <begin position="269"/>
        <end position="273"/>
    </location>
</feature>
<feature type="active site" description="Proton acceptor" evidence="1">
    <location>
        <position position="89"/>
    </location>
</feature>
<feature type="active site" description="Nucleophile" evidence="1">
    <location>
        <position position="264"/>
    </location>
</feature>
<feature type="binding site" evidence="1">
    <location>
        <begin position="89"/>
        <end position="93"/>
    </location>
    <ligand>
        <name>substrate</name>
    </ligand>
</feature>
<feature type="binding site" evidence="1">
    <location>
        <position position="143"/>
    </location>
    <ligand>
        <name>substrate</name>
    </ligand>
</feature>
<feature type="binding site" evidence="1">
    <location>
        <position position="187"/>
    </location>
    <ligand>
        <name>substrate</name>
    </ligand>
</feature>
<feature type="binding site" evidence="1">
    <location>
        <position position="214"/>
    </location>
    <ligand>
        <name>substrate</name>
    </ligand>
</feature>
<feature type="binding site" evidence="1">
    <location>
        <position position="302"/>
    </location>
    <ligand>
        <name>Zn(2+)</name>
        <dbReference type="ChEBI" id="CHEBI:29105"/>
    </ligand>
</feature>
<feature type="binding site" evidence="1">
    <location>
        <position position="304"/>
    </location>
    <ligand>
        <name>Zn(2+)</name>
        <dbReference type="ChEBI" id="CHEBI:29105"/>
    </ligand>
</feature>
<feature type="binding site" evidence="1">
    <location>
        <position position="307"/>
    </location>
    <ligand>
        <name>Zn(2+)</name>
        <dbReference type="ChEBI" id="CHEBI:29105"/>
    </ligand>
</feature>
<feature type="binding site" evidence="1">
    <location>
        <position position="333"/>
    </location>
    <ligand>
        <name>Zn(2+)</name>
        <dbReference type="ChEBI" id="CHEBI:29105"/>
    </ligand>
</feature>
<proteinExistence type="inferred from homology"/>
<keyword id="KW-0328">Glycosyltransferase</keyword>
<keyword id="KW-0479">Metal-binding</keyword>
<keyword id="KW-0671">Queuosine biosynthesis</keyword>
<keyword id="KW-1185">Reference proteome</keyword>
<keyword id="KW-0808">Transferase</keyword>
<keyword id="KW-0819">tRNA processing</keyword>
<keyword id="KW-0862">Zinc</keyword>
<gene>
    <name evidence="1" type="primary">tgt</name>
    <name type="ordered locus">BCI_0597</name>
</gene>
<comment type="function">
    <text evidence="1">Catalyzes the base-exchange of a guanine (G) residue with the queuine precursor 7-aminomethyl-7-deazaguanine (PreQ1) at position 34 (anticodon wobble position) in tRNAs with GU(N) anticodons (tRNA-Asp, -Asn, -His and -Tyr). Catalysis occurs through a double-displacement mechanism. The nucleophile active site attacks the C1' of nucleotide 34 to detach the guanine base from the RNA, forming a covalent enzyme-RNA intermediate. The proton acceptor active site deprotonates the incoming PreQ1, allowing a nucleophilic attack on the C1' of the ribose to form the product. After dissociation, two additional enzymatic reactions on the tRNA convert PreQ1 to queuine (Q), resulting in the hypermodified nucleoside queuosine (7-(((4,5-cis-dihydroxy-2-cyclopenten-1-yl)amino)methyl)-7-deazaguanosine).</text>
</comment>
<comment type="catalytic activity">
    <reaction evidence="1">
        <text>7-aminomethyl-7-carbaguanine + guanosine(34) in tRNA = 7-aminomethyl-7-carbaguanosine(34) in tRNA + guanine</text>
        <dbReference type="Rhea" id="RHEA:24104"/>
        <dbReference type="Rhea" id="RHEA-COMP:10341"/>
        <dbReference type="Rhea" id="RHEA-COMP:10342"/>
        <dbReference type="ChEBI" id="CHEBI:16235"/>
        <dbReference type="ChEBI" id="CHEBI:58703"/>
        <dbReference type="ChEBI" id="CHEBI:74269"/>
        <dbReference type="ChEBI" id="CHEBI:82833"/>
        <dbReference type="EC" id="2.4.2.29"/>
    </reaction>
</comment>
<comment type="cofactor">
    <cofactor evidence="1">
        <name>Zn(2+)</name>
        <dbReference type="ChEBI" id="CHEBI:29105"/>
    </cofactor>
    <text evidence="1">Binds 1 zinc ion per subunit.</text>
</comment>
<comment type="pathway">
    <text evidence="1">tRNA modification; tRNA-queuosine biosynthesis.</text>
</comment>
<comment type="subunit">
    <text evidence="1">Homodimer. Within each dimer, one monomer is responsible for RNA recognition and catalysis, while the other monomer binds to the replacement base PreQ1.</text>
</comment>
<comment type="similarity">
    <text evidence="1">Belongs to the queuine tRNA-ribosyltransferase family.</text>
</comment>
<organism>
    <name type="scientific">Baumannia cicadellinicola subsp. Homalodisca coagulata</name>
    <dbReference type="NCBI Taxonomy" id="374463"/>
    <lineage>
        <taxon>Bacteria</taxon>
        <taxon>Pseudomonadati</taxon>
        <taxon>Pseudomonadota</taxon>
        <taxon>Gammaproteobacteria</taxon>
        <taxon>Candidatus Palibaumannia</taxon>
    </lineage>
</organism>
<sequence>MKYQLLKNCAGARRGRIQFDRGVVETPAFMPVGTYGTVKSLTTEEVKDTGTQMILCNAFHLWLRSEQEIIKLHGDLHHFMHWYGPIITDSGGFQIFSISNLNKITEAGVYFRHPINGSAIFLSPEKSMEIQYDLGSDIVMVLDECTPYPVQWDEAKKSMVMSLRWSERSHKRFHELKNNNALFGIIQGGMYKDLRDLSVKKLIEIGFDGYAIGGLSVGEPKENMHHILAHICPQLPEDKPRYLMGVGKPEDLIEGWRRGIDMFDCVIPTRNARNGHLFVTNGVVKIRNAKYKYDITSLDIYCDCYTCCNYSRAYLHHLSRCNEILGARLNTIHNLRYYQRLMADLRDAIDTGTSQYFIEEFYNKTRNSYY</sequence>
<protein>
    <recommendedName>
        <fullName evidence="1">Queuine tRNA-ribosyltransferase</fullName>
        <ecNumber evidence="1">2.4.2.29</ecNumber>
    </recommendedName>
    <alternativeName>
        <fullName evidence="1">Guanine insertion enzyme</fullName>
    </alternativeName>
    <alternativeName>
        <fullName evidence="1">tRNA-guanine transglycosylase</fullName>
    </alternativeName>
</protein>
<dbReference type="EC" id="2.4.2.29" evidence="1"/>
<dbReference type="EMBL" id="CP000238">
    <property type="protein sequence ID" value="ABF13815.1"/>
    <property type="molecule type" value="Genomic_DNA"/>
</dbReference>
<dbReference type="RefSeq" id="WP_011520757.1">
    <property type="nucleotide sequence ID" value="NC_007984.1"/>
</dbReference>
<dbReference type="SMR" id="Q1LSP0"/>
<dbReference type="STRING" id="374463.BCI_0597"/>
<dbReference type="KEGG" id="bci:BCI_0597"/>
<dbReference type="HOGENOM" id="CLU_022060_0_1_6"/>
<dbReference type="OrthoDB" id="9805417at2"/>
<dbReference type="UniPathway" id="UPA00392"/>
<dbReference type="Proteomes" id="UP000002427">
    <property type="component" value="Chromosome"/>
</dbReference>
<dbReference type="GO" id="GO:0005829">
    <property type="term" value="C:cytosol"/>
    <property type="evidence" value="ECO:0007669"/>
    <property type="project" value="TreeGrafter"/>
</dbReference>
<dbReference type="GO" id="GO:0046872">
    <property type="term" value="F:metal ion binding"/>
    <property type="evidence" value="ECO:0007669"/>
    <property type="project" value="UniProtKB-KW"/>
</dbReference>
<dbReference type="GO" id="GO:0008479">
    <property type="term" value="F:tRNA-guanosine(34) queuine transglycosylase activity"/>
    <property type="evidence" value="ECO:0007669"/>
    <property type="project" value="UniProtKB-UniRule"/>
</dbReference>
<dbReference type="GO" id="GO:0008616">
    <property type="term" value="P:queuosine biosynthetic process"/>
    <property type="evidence" value="ECO:0007669"/>
    <property type="project" value="UniProtKB-UniRule"/>
</dbReference>
<dbReference type="GO" id="GO:0002099">
    <property type="term" value="P:tRNA wobble guanine modification"/>
    <property type="evidence" value="ECO:0007669"/>
    <property type="project" value="TreeGrafter"/>
</dbReference>
<dbReference type="GO" id="GO:0101030">
    <property type="term" value="P:tRNA-guanine transglycosylation"/>
    <property type="evidence" value="ECO:0007669"/>
    <property type="project" value="InterPro"/>
</dbReference>
<dbReference type="FunFam" id="3.20.20.105:FF:000001">
    <property type="entry name" value="Queuine tRNA-ribosyltransferase"/>
    <property type="match status" value="1"/>
</dbReference>
<dbReference type="Gene3D" id="3.20.20.105">
    <property type="entry name" value="Queuine tRNA-ribosyltransferase-like"/>
    <property type="match status" value="1"/>
</dbReference>
<dbReference type="HAMAP" id="MF_00168">
    <property type="entry name" value="Q_tRNA_Tgt"/>
    <property type="match status" value="1"/>
</dbReference>
<dbReference type="InterPro" id="IPR050076">
    <property type="entry name" value="ArchSynthase1/Queuine_TRR"/>
</dbReference>
<dbReference type="InterPro" id="IPR004803">
    <property type="entry name" value="TGT"/>
</dbReference>
<dbReference type="InterPro" id="IPR036511">
    <property type="entry name" value="TGT-like_sf"/>
</dbReference>
<dbReference type="InterPro" id="IPR002616">
    <property type="entry name" value="tRNA_ribo_trans-like"/>
</dbReference>
<dbReference type="NCBIfam" id="TIGR00430">
    <property type="entry name" value="Q_tRNA_tgt"/>
    <property type="match status" value="1"/>
</dbReference>
<dbReference type="NCBIfam" id="TIGR00449">
    <property type="entry name" value="tgt_general"/>
    <property type="match status" value="1"/>
</dbReference>
<dbReference type="PANTHER" id="PTHR46499">
    <property type="entry name" value="QUEUINE TRNA-RIBOSYLTRANSFERASE"/>
    <property type="match status" value="1"/>
</dbReference>
<dbReference type="PANTHER" id="PTHR46499:SF1">
    <property type="entry name" value="QUEUINE TRNA-RIBOSYLTRANSFERASE"/>
    <property type="match status" value="1"/>
</dbReference>
<dbReference type="Pfam" id="PF01702">
    <property type="entry name" value="TGT"/>
    <property type="match status" value="1"/>
</dbReference>
<dbReference type="SUPFAM" id="SSF51713">
    <property type="entry name" value="tRNA-guanine transglycosylase"/>
    <property type="match status" value="1"/>
</dbReference>
<reference key="1">
    <citation type="journal article" date="2006" name="PLoS Biol.">
        <title>Metabolic complementarity and genomics of the dual bacterial symbiosis of sharpshooters.</title>
        <authorList>
            <person name="Wu D."/>
            <person name="Daugherty S.C."/>
            <person name="Van Aken S.E."/>
            <person name="Pai G.H."/>
            <person name="Watkins K.L."/>
            <person name="Khouri H."/>
            <person name="Tallon L.J."/>
            <person name="Zaborsky J.M."/>
            <person name="Dunbar H.E."/>
            <person name="Tran P.L."/>
            <person name="Moran N.A."/>
            <person name="Eisen J.A."/>
        </authorList>
    </citation>
    <scope>NUCLEOTIDE SEQUENCE [LARGE SCALE GENOMIC DNA]</scope>
</reference>
<evidence type="ECO:0000255" key="1">
    <source>
        <dbReference type="HAMAP-Rule" id="MF_00168"/>
    </source>
</evidence>
<name>TGT_BAUCH</name>